<sequence>MGKNVVVLGTQWGDEGKGKIVDLLTEKVSQVARFQGGHNAGHTLVIEGKKTVLHLIPSGILHDGVTCMIGNGVVLSPEALIKEIEELEANGVEVRSKLKLSPACPLILPYHVALDLARESKRGDAKIGTTGRGIGPAYEDKVSRRGLRLGDLLNEQRFAAKLAEVLEYHNFALTQYYGAEPVDYQEVLNKALELGAQLRPMIADVVDMLHTSRENGEHILFEGAQGSLLDIDHGTYPFVTSSNTTAGGTATGSGFGPLYLDYVLGITKAYTTRVGSGPFPTELECDVGKHLGEKGHEFGATTGRQRRTGWFDAVAVRHAVRINSMTGMCLTKLDVLDGLSEVKICVGYKDSNGAVIGIPCDAEGWADVQPVYESMPGWTASTVGAKTMEELPVEAVNYIRRLEELVGIPADIISTGPDRVETIVLRHPFEG</sequence>
<protein>
    <recommendedName>
        <fullName evidence="1">Adenylosuccinate synthetase</fullName>
        <shortName evidence="1">AMPSase</shortName>
        <shortName evidence="1">AdSS</shortName>
        <ecNumber evidence="1">6.3.4.4</ecNumber>
    </recommendedName>
    <alternativeName>
        <fullName evidence="1">IMP--aspartate ligase</fullName>
    </alternativeName>
</protein>
<comment type="function">
    <text evidence="1">Plays an important role in the de novo pathway of purine nucleotide biosynthesis. Catalyzes the first committed step in the biosynthesis of AMP from IMP.</text>
</comment>
<comment type="catalytic activity">
    <reaction evidence="1">
        <text>IMP + L-aspartate + GTP = N(6)-(1,2-dicarboxyethyl)-AMP + GDP + phosphate + 2 H(+)</text>
        <dbReference type="Rhea" id="RHEA:15753"/>
        <dbReference type="ChEBI" id="CHEBI:15378"/>
        <dbReference type="ChEBI" id="CHEBI:29991"/>
        <dbReference type="ChEBI" id="CHEBI:37565"/>
        <dbReference type="ChEBI" id="CHEBI:43474"/>
        <dbReference type="ChEBI" id="CHEBI:57567"/>
        <dbReference type="ChEBI" id="CHEBI:58053"/>
        <dbReference type="ChEBI" id="CHEBI:58189"/>
        <dbReference type="EC" id="6.3.4.4"/>
    </reaction>
</comment>
<comment type="cofactor">
    <cofactor evidence="1">
        <name>Mg(2+)</name>
        <dbReference type="ChEBI" id="CHEBI:18420"/>
    </cofactor>
    <text evidence="1">Binds 1 Mg(2+) ion per subunit.</text>
</comment>
<comment type="pathway">
    <text evidence="1">Purine metabolism; AMP biosynthesis via de novo pathway; AMP from IMP: step 1/2.</text>
</comment>
<comment type="subunit">
    <text evidence="1">Homodimer.</text>
</comment>
<comment type="subcellular location">
    <subcellularLocation>
        <location evidence="1">Cytoplasm</location>
    </subcellularLocation>
</comment>
<comment type="similarity">
    <text evidence="1">Belongs to the adenylosuccinate synthetase family.</text>
</comment>
<feature type="chain" id="PRO_1000000913" description="Adenylosuccinate synthetase">
    <location>
        <begin position="1"/>
        <end position="431"/>
    </location>
</feature>
<feature type="active site" description="Proton acceptor" evidence="1">
    <location>
        <position position="14"/>
    </location>
</feature>
<feature type="active site" description="Proton donor" evidence="1">
    <location>
        <position position="42"/>
    </location>
</feature>
<feature type="binding site" evidence="1">
    <location>
        <begin position="13"/>
        <end position="19"/>
    </location>
    <ligand>
        <name>GTP</name>
        <dbReference type="ChEBI" id="CHEBI:37565"/>
    </ligand>
</feature>
<feature type="binding site" description="in other chain" evidence="1">
    <location>
        <begin position="14"/>
        <end position="17"/>
    </location>
    <ligand>
        <name>IMP</name>
        <dbReference type="ChEBI" id="CHEBI:58053"/>
        <note>ligand shared between dimeric partners</note>
    </ligand>
</feature>
<feature type="binding site" evidence="1">
    <location>
        <position position="14"/>
    </location>
    <ligand>
        <name>Mg(2+)</name>
        <dbReference type="ChEBI" id="CHEBI:18420"/>
    </ligand>
</feature>
<feature type="binding site" description="in other chain" evidence="1">
    <location>
        <begin position="39"/>
        <end position="42"/>
    </location>
    <ligand>
        <name>IMP</name>
        <dbReference type="ChEBI" id="CHEBI:58053"/>
        <note>ligand shared between dimeric partners</note>
    </ligand>
</feature>
<feature type="binding site" evidence="1">
    <location>
        <begin position="41"/>
        <end position="43"/>
    </location>
    <ligand>
        <name>GTP</name>
        <dbReference type="ChEBI" id="CHEBI:37565"/>
    </ligand>
</feature>
<feature type="binding site" evidence="1">
    <location>
        <position position="41"/>
    </location>
    <ligand>
        <name>Mg(2+)</name>
        <dbReference type="ChEBI" id="CHEBI:18420"/>
    </ligand>
</feature>
<feature type="binding site" description="in other chain" evidence="1">
    <location>
        <position position="130"/>
    </location>
    <ligand>
        <name>IMP</name>
        <dbReference type="ChEBI" id="CHEBI:58053"/>
        <note>ligand shared between dimeric partners</note>
    </ligand>
</feature>
<feature type="binding site" evidence="1">
    <location>
        <position position="144"/>
    </location>
    <ligand>
        <name>IMP</name>
        <dbReference type="ChEBI" id="CHEBI:58053"/>
        <note>ligand shared between dimeric partners</note>
    </ligand>
</feature>
<feature type="binding site" description="in other chain" evidence="1">
    <location>
        <position position="225"/>
    </location>
    <ligand>
        <name>IMP</name>
        <dbReference type="ChEBI" id="CHEBI:58053"/>
        <note>ligand shared between dimeric partners</note>
    </ligand>
</feature>
<feature type="binding site" description="in other chain" evidence="1">
    <location>
        <position position="240"/>
    </location>
    <ligand>
        <name>IMP</name>
        <dbReference type="ChEBI" id="CHEBI:58053"/>
        <note>ligand shared between dimeric partners</note>
    </ligand>
</feature>
<feature type="binding site" evidence="1">
    <location>
        <begin position="300"/>
        <end position="306"/>
    </location>
    <ligand>
        <name>substrate</name>
    </ligand>
</feature>
<feature type="binding site" description="in other chain" evidence="1">
    <location>
        <position position="304"/>
    </location>
    <ligand>
        <name>IMP</name>
        <dbReference type="ChEBI" id="CHEBI:58053"/>
        <note>ligand shared between dimeric partners</note>
    </ligand>
</feature>
<feature type="binding site" evidence="1">
    <location>
        <position position="306"/>
    </location>
    <ligand>
        <name>GTP</name>
        <dbReference type="ChEBI" id="CHEBI:37565"/>
    </ligand>
</feature>
<feature type="binding site" evidence="1">
    <location>
        <begin position="332"/>
        <end position="334"/>
    </location>
    <ligand>
        <name>GTP</name>
        <dbReference type="ChEBI" id="CHEBI:37565"/>
    </ligand>
</feature>
<feature type="binding site" evidence="1">
    <location>
        <begin position="414"/>
        <end position="416"/>
    </location>
    <ligand>
        <name>GTP</name>
        <dbReference type="ChEBI" id="CHEBI:37565"/>
    </ligand>
</feature>
<name>PURA_SACD2</name>
<organism>
    <name type="scientific">Saccharophagus degradans (strain 2-40 / ATCC 43961 / DSM 17024)</name>
    <dbReference type="NCBI Taxonomy" id="203122"/>
    <lineage>
        <taxon>Bacteria</taxon>
        <taxon>Pseudomonadati</taxon>
        <taxon>Pseudomonadota</taxon>
        <taxon>Gammaproteobacteria</taxon>
        <taxon>Cellvibrionales</taxon>
        <taxon>Cellvibrionaceae</taxon>
        <taxon>Saccharophagus</taxon>
    </lineage>
</organism>
<proteinExistence type="inferred from homology"/>
<accession>Q21HA8</accession>
<keyword id="KW-0963">Cytoplasm</keyword>
<keyword id="KW-0342">GTP-binding</keyword>
<keyword id="KW-0436">Ligase</keyword>
<keyword id="KW-0460">Magnesium</keyword>
<keyword id="KW-0479">Metal-binding</keyword>
<keyword id="KW-0547">Nucleotide-binding</keyword>
<keyword id="KW-0658">Purine biosynthesis</keyword>
<keyword id="KW-1185">Reference proteome</keyword>
<evidence type="ECO:0000255" key="1">
    <source>
        <dbReference type="HAMAP-Rule" id="MF_00011"/>
    </source>
</evidence>
<reference key="1">
    <citation type="journal article" date="2008" name="PLoS Genet.">
        <title>Complete genome sequence of the complex carbohydrate-degrading marine bacterium, Saccharophagus degradans strain 2-40 T.</title>
        <authorList>
            <person name="Weiner R.M."/>
            <person name="Taylor L.E. II"/>
            <person name="Henrissat B."/>
            <person name="Hauser L."/>
            <person name="Land M."/>
            <person name="Coutinho P.M."/>
            <person name="Rancurel C."/>
            <person name="Saunders E.H."/>
            <person name="Longmire A.G."/>
            <person name="Zhang H."/>
            <person name="Bayer E.A."/>
            <person name="Gilbert H.J."/>
            <person name="Larimer F."/>
            <person name="Zhulin I.B."/>
            <person name="Ekborg N.A."/>
            <person name="Lamed R."/>
            <person name="Richardson P.M."/>
            <person name="Borovok I."/>
            <person name="Hutcheson S."/>
        </authorList>
    </citation>
    <scope>NUCLEOTIDE SEQUENCE [LARGE SCALE GENOMIC DNA]</scope>
    <source>
        <strain>2-40 / ATCC 43961 / DSM 17024</strain>
    </source>
</reference>
<dbReference type="EC" id="6.3.4.4" evidence="1"/>
<dbReference type="EMBL" id="CP000282">
    <property type="protein sequence ID" value="ABD81921.1"/>
    <property type="molecule type" value="Genomic_DNA"/>
</dbReference>
<dbReference type="RefSeq" id="WP_011469138.1">
    <property type="nucleotide sequence ID" value="NC_007912.1"/>
</dbReference>
<dbReference type="SMR" id="Q21HA8"/>
<dbReference type="STRING" id="203122.Sde_2661"/>
<dbReference type="GeneID" id="98614319"/>
<dbReference type="KEGG" id="sde:Sde_2661"/>
<dbReference type="eggNOG" id="COG0104">
    <property type="taxonomic scope" value="Bacteria"/>
</dbReference>
<dbReference type="HOGENOM" id="CLU_029848_0_0_6"/>
<dbReference type="OrthoDB" id="9807553at2"/>
<dbReference type="UniPathway" id="UPA00075">
    <property type="reaction ID" value="UER00335"/>
</dbReference>
<dbReference type="Proteomes" id="UP000001947">
    <property type="component" value="Chromosome"/>
</dbReference>
<dbReference type="GO" id="GO:0005737">
    <property type="term" value="C:cytoplasm"/>
    <property type="evidence" value="ECO:0007669"/>
    <property type="project" value="UniProtKB-SubCell"/>
</dbReference>
<dbReference type="GO" id="GO:0004019">
    <property type="term" value="F:adenylosuccinate synthase activity"/>
    <property type="evidence" value="ECO:0007669"/>
    <property type="project" value="UniProtKB-UniRule"/>
</dbReference>
<dbReference type="GO" id="GO:0005525">
    <property type="term" value="F:GTP binding"/>
    <property type="evidence" value="ECO:0007669"/>
    <property type="project" value="UniProtKB-UniRule"/>
</dbReference>
<dbReference type="GO" id="GO:0000287">
    <property type="term" value="F:magnesium ion binding"/>
    <property type="evidence" value="ECO:0007669"/>
    <property type="project" value="UniProtKB-UniRule"/>
</dbReference>
<dbReference type="GO" id="GO:0044208">
    <property type="term" value="P:'de novo' AMP biosynthetic process"/>
    <property type="evidence" value="ECO:0007669"/>
    <property type="project" value="UniProtKB-UniRule"/>
</dbReference>
<dbReference type="GO" id="GO:0046040">
    <property type="term" value="P:IMP metabolic process"/>
    <property type="evidence" value="ECO:0007669"/>
    <property type="project" value="TreeGrafter"/>
</dbReference>
<dbReference type="CDD" id="cd03108">
    <property type="entry name" value="AdSS"/>
    <property type="match status" value="1"/>
</dbReference>
<dbReference type="FunFam" id="1.10.300.10:FF:000001">
    <property type="entry name" value="Adenylosuccinate synthetase"/>
    <property type="match status" value="1"/>
</dbReference>
<dbReference type="FunFam" id="3.90.170.10:FF:000001">
    <property type="entry name" value="Adenylosuccinate synthetase"/>
    <property type="match status" value="1"/>
</dbReference>
<dbReference type="Gene3D" id="3.40.440.10">
    <property type="entry name" value="Adenylosuccinate Synthetase, subunit A, domain 1"/>
    <property type="match status" value="1"/>
</dbReference>
<dbReference type="Gene3D" id="1.10.300.10">
    <property type="entry name" value="Adenylosuccinate Synthetase, subunit A, domain 2"/>
    <property type="match status" value="1"/>
</dbReference>
<dbReference type="Gene3D" id="3.90.170.10">
    <property type="entry name" value="Adenylosuccinate Synthetase, subunit A, domain 3"/>
    <property type="match status" value="1"/>
</dbReference>
<dbReference type="HAMAP" id="MF_00011">
    <property type="entry name" value="Adenylosucc_synth"/>
    <property type="match status" value="1"/>
</dbReference>
<dbReference type="InterPro" id="IPR018220">
    <property type="entry name" value="Adenylosuccin_syn_GTP-bd"/>
</dbReference>
<dbReference type="InterPro" id="IPR033128">
    <property type="entry name" value="Adenylosuccin_syn_Lys_AS"/>
</dbReference>
<dbReference type="InterPro" id="IPR042109">
    <property type="entry name" value="Adenylosuccinate_synth_dom1"/>
</dbReference>
<dbReference type="InterPro" id="IPR042110">
    <property type="entry name" value="Adenylosuccinate_synth_dom2"/>
</dbReference>
<dbReference type="InterPro" id="IPR042111">
    <property type="entry name" value="Adenylosuccinate_synth_dom3"/>
</dbReference>
<dbReference type="InterPro" id="IPR001114">
    <property type="entry name" value="Adenylosuccinate_synthetase"/>
</dbReference>
<dbReference type="InterPro" id="IPR027417">
    <property type="entry name" value="P-loop_NTPase"/>
</dbReference>
<dbReference type="NCBIfam" id="NF002223">
    <property type="entry name" value="PRK01117.1"/>
    <property type="match status" value="1"/>
</dbReference>
<dbReference type="NCBIfam" id="TIGR00184">
    <property type="entry name" value="purA"/>
    <property type="match status" value="1"/>
</dbReference>
<dbReference type="PANTHER" id="PTHR11846">
    <property type="entry name" value="ADENYLOSUCCINATE SYNTHETASE"/>
    <property type="match status" value="1"/>
</dbReference>
<dbReference type="PANTHER" id="PTHR11846:SF0">
    <property type="entry name" value="ADENYLOSUCCINATE SYNTHETASE"/>
    <property type="match status" value="1"/>
</dbReference>
<dbReference type="Pfam" id="PF00709">
    <property type="entry name" value="Adenylsucc_synt"/>
    <property type="match status" value="1"/>
</dbReference>
<dbReference type="SMART" id="SM00788">
    <property type="entry name" value="Adenylsucc_synt"/>
    <property type="match status" value="1"/>
</dbReference>
<dbReference type="SUPFAM" id="SSF52540">
    <property type="entry name" value="P-loop containing nucleoside triphosphate hydrolases"/>
    <property type="match status" value="1"/>
</dbReference>
<dbReference type="PROSITE" id="PS01266">
    <property type="entry name" value="ADENYLOSUCCIN_SYN_1"/>
    <property type="match status" value="1"/>
</dbReference>
<dbReference type="PROSITE" id="PS00513">
    <property type="entry name" value="ADENYLOSUCCIN_SYN_2"/>
    <property type="match status" value="1"/>
</dbReference>
<gene>
    <name evidence="1" type="primary">purA</name>
    <name type="ordered locus">Sde_2661</name>
</gene>